<gene>
    <name evidence="12" type="primary">chpE</name>
    <name type="ordered locus">SCO1800</name>
</gene>
<comment type="function">
    <text evidence="2 3 4 5 6 7 8 9">One of 8 partially redundant surface-active proteins required for efficient formation of aerial mycelium; the short chaplins assemble into a hydrophobic, amyloidal fibrillar surface layer that envelopes and protects aerial hyphae and spores, presumably anchored to the long chaplins (PubMed:12832396, PubMed:12832397, PubMed:15228525, PubMed:17462011). Chaplins have an overlapping function with the surface-active SapB peptide; chaplins are essential on minimal medium while on rich medium both chaplins and SapB are required for efficient aerial hyphae formation (PubMed:17462011). Chaplins are also involved in cell attachment to a hydrophobic surface (PubMed:19682261). Forms amyloid fibrils in vitro probably composed of stacked beta-sheets, at low extracellular concentrations individually restores the ability to form aerial hyphae to a chaplin-deficient strain, but does so less well than other short chaplins (PubMed:21526199). A small chaplin extract (ChpD, ChpE, ChpF, ChpG and ChpH) self-assembles into 2 different amyloids; small fibrils at the air-water interface form an amphipathic membrane that resembles spore-surface structures involved in aerial hyphae formation, and hydrophilic fibrils in solution that resemble the fibers that attach cells to a hydrophobic surface. At the air-water interface the hydrophilic surface is in contact with water (probably equivalent to the peptidoglycan layer), while the hydrophobic face is exposed to the air, making the surface of the aerial hyphae hydrophobic (PubMed:24012833). A minimal chaplin strain capable of forming aerial mycelium/hyphae on minimal medium contains ChpC, ChpE and ChpH. The strain also has restored rodlet formation on the hyphae surface. A second strain with ChpA, ChpD and ChpE makes slightly less robust hyphae. This essential chaplin may coordinate the assembly and/or polymerization of the other chaplins (PubMed:18586935). A small chaplin extract applied to a chaplin-deficient strain restores aerial hyphae formation (PubMed:12832396, PubMed:12832397). The small chaplin extract forms an amyloid-like structure similar to that seen on the surface of cells without rodlets (rdlA-rdlB deletions), and is highly surface active, reducing surface tension from 72 to 26 mJ/m(2), which probably allows escape of hyphae from an aqueous environment into air (PubMed:12832396).</text>
</comment>
<comment type="subcellular location">
    <subcellularLocation>
        <location evidence="2 3 5">Cell surface</location>
    </subcellularLocation>
    <subcellularLocation>
        <location evidence="2 3">Secreted</location>
        <location evidence="2 3">Cell wall</location>
    </subcellularLocation>
    <subcellularLocation>
        <location evidence="7">Fimbrium</location>
    </subcellularLocation>
</comment>
<comment type="developmental stage">
    <text evidence="2 5 13">Present in aerial hyphae of sporulating cultures (at protein level) (PubMed:12832396, PubMed:17462011). Strongest expression in spores, with weaker expression in aerial hyphae.</text>
</comment>
<comment type="induction">
    <text evidence="2 3 5">Highly expressed in 24 hour cultures while still submerged, during aerial hyphae formation on minimal medium, decreases once aerial growth ceases (PubMed:12832396). Strongly induced during aerial hyphae formation and sporulation on rich medium, under control of ECF sigma factor BldN; more strongly expressed when sporulation is blocked by deletion of whiB, whiD or whiH (PubMed:12832397). Expression depends on bldB but not bldA, bldD or bldH (at protein level) (PubMed:17462011).</text>
</comment>
<comment type="domain">
    <text evidence="11 14">The mature protein has a random coil structure at acidic pH, rapidly changing to beta-sheet as the pH rises (examined from pH 3.0 to 10.0); at pH 6.7 and higher forms amyloid fibrils visible by electron microscopy.</text>
</comment>
<comment type="mass spectrometry" mass="5279.0" method="MALDI" evidence="2"/>
<comment type="mass spectrometry" mass="5271.65" method="MALDI" evidence="3"/>
<comment type="disruption phenotype">
    <text evidence="2 4 5 6 7">Essential, it cannot be disrupted individually in a wild-type strain; the lethal effects of its disruption are suppressed by loss of some other chaplins, the roldet protein (RdlA and RdlB) or by inactivation of the tat secretion pathway (PubMed:18586935). Quintuple knockout chpA-chpB-chpC-chpD-chpH has strongly delayed aerial hyphae formation, makes many fewer aerial hyphae but no effect on viability of the spores produced. Further deletion of chpE leads to more severe effects, and on rich media few aerial hyphae are produced after prolonged growth. Those few hyphae do differentiate into spores and have a rodlet layer (PubMed:12832396). Deletion of all 8 chaplin genes on minimal medium leads to severely disrupted aerial hyphae that collapse on the colony surface and are not hydrophobic. A few spore chains can still be made, but they have neither rodlets or amyloid-like fibers. rdlA and rdlB mRNA are down-regulated (PubMed:15228525, PubMed:17462011). Deletion of all 8 chaplin genes on rich medium leads to a reduced abundance of aerial hyphae without rodlets and occasional spore chains on surface hyphae. A complete chaplin-negative plus ram-negative strain (deletion of ramR or the ramC-ramS-ramA-ramB operon) leads to the complete loss of robust aerial hyphae (PubMed:17462011). Deletion of all 8 chaplin genes significantly reduces cellular attachment to a hydrophobic substrate; thin fibrils instead of fimbrae are detected. The long chaplins (ChpA, ChpB and ChpC, as seen by near wild-type attachment of the hextuple chpA-chpB-chpC-chpD-chpE-chpH knockout) are not essential but may contribute to attachment (PubMed:19682261).</text>
</comment>
<comment type="biotechnology">
    <text evidence="10">The small chaplin mixture (a cell wall extract of an rdlA-rdlB knockout) forms a stable coat on a number of surfaces (including Teflon and cotton) and emulsifies oil-water mixtures, which could be useful in medical and technical applications.</text>
</comment>
<comment type="similarity">
    <text evidence="13">Belongs to the chaplin family. Short chaplin subfamily.</text>
</comment>
<accession>Q9X9Z2</accession>
<name>CHPE_STRCO</name>
<keyword id="KW-0034">Amyloid</keyword>
<keyword id="KW-0130">Cell adhesion</keyword>
<keyword id="KW-0134">Cell wall</keyword>
<keyword id="KW-0281">Fimbrium</keyword>
<keyword id="KW-1185">Reference proteome</keyword>
<keyword id="KW-0964">Secreted</keyword>
<keyword id="KW-0732">Signal</keyword>
<organism>
    <name type="scientific">Streptomyces coelicolor (strain ATCC BAA-471 / A3(2) / M145)</name>
    <dbReference type="NCBI Taxonomy" id="100226"/>
    <lineage>
        <taxon>Bacteria</taxon>
        <taxon>Bacillati</taxon>
        <taxon>Actinomycetota</taxon>
        <taxon>Actinomycetes</taxon>
        <taxon>Kitasatosporales</taxon>
        <taxon>Streptomycetaceae</taxon>
        <taxon>Streptomyces</taxon>
        <taxon>Streptomyces albidoflavus group</taxon>
    </lineage>
</organism>
<dbReference type="EMBL" id="AL939110">
    <property type="protein sequence ID" value="CAB45292.1"/>
    <property type="molecule type" value="Genomic_DNA"/>
</dbReference>
<dbReference type="PIR" id="T36861">
    <property type="entry name" value="T36861"/>
</dbReference>
<dbReference type="RefSeq" id="NP_626070.1">
    <property type="nucleotide sequence ID" value="NC_003888.3"/>
</dbReference>
<dbReference type="RefSeq" id="WP_003977022.1">
    <property type="nucleotide sequence ID" value="NZ_VNID01000001.1"/>
</dbReference>
<dbReference type="STRING" id="100226.gene:17759397"/>
<dbReference type="PaxDb" id="100226-SCO1800"/>
<dbReference type="GeneID" id="96651351"/>
<dbReference type="KEGG" id="sco:SCO1800"/>
<dbReference type="PATRIC" id="fig|100226.15.peg.1821"/>
<dbReference type="eggNOG" id="ENOG50348JU">
    <property type="taxonomic scope" value="Bacteria"/>
</dbReference>
<dbReference type="HOGENOM" id="CLU_145456_3_1_11"/>
<dbReference type="InParanoid" id="Q9X9Z2"/>
<dbReference type="OrthoDB" id="3544424at2"/>
<dbReference type="PhylomeDB" id="Q9X9Z2"/>
<dbReference type="Proteomes" id="UP000001973">
    <property type="component" value="Chromosome"/>
</dbReference>
<dbReference type="GO" id="GO:0009986">
    <property type="term" value="C:cell surface"/>
    <property type="evidence" value="ECO:0007669"/>
    <property type="project" value="UniProtKB-SubCell"/>
</dbReference>
<dbReference type="GO" id="GO:0005576">
    <property type="term" value="C:extracellular region"/>
    <property type="evidence" value="ECO:0007669"/>
    <property type="project" value="UniProtKB-KW"/>
</dbReference>
<dbReference type="GO" id="GO:0009289">
    <property type="term" value="C:pilus"/>
    <property type="evidence" value="ECO:0007669"/>
    <property type="project" value="UniProtKB-SubCell"/>
</dbReference>
<dbReference type="GO" id="GO:0007155">
    <property type="term" value="P:cell adhesion"/>
    <property type="evidence" value="ECO:0007669"/>
    <property type="project" value="UniProtKB-KW"/>
</dbReference>
<dbReference type="InterPro" id="IPR005528">
    <property type="entry name" value="ChpA-H"/>
</dbReference>
<dbReference type="Pfam" id="PF03777">
    <property type="entry name" value="ChpA-C"/>
    <property type="match status" value="1"/>
</dbReference>
<dbReference type="PROSITE" id="PS51884">
    <property type="entry name" value="CHAPLIN"/>
    <property type="match status" value="1"/>
</dbReference>
<sequence length="82" mass="7760">MKNLKKAAAVTMVAGGLIAAGAGMASATDGGAHAHGKAVGSPGVASGNLVQAPIHIPVNAVGNSVNVIGVLNPAFGNLGVNH</sequence>
<reference key="1">
    <citation type="journal article" date="2002" name="Nature">
        <title>Complete genome sequence of the model actinomycete Streptomyces coelicolor A3(2).</title>
        <authorList>
            <person name="Bentley S.D."/>
            <person name="Chater K.F."/>
            <person name="Cerdeno-Tarraga A.-M."/>
            <person name="Challis G.L."/>
            <person name="Thomson N.R."/>
            <person name="James K.D."/>
            <person name="Harris D.E."/>
            <person name="Quail M.A."/>
            <person name="Kieser H."/>
            <person name="Harper D."/>
            <person name="Bateman A."/>
            <person name="Brown S."/>
            <person name="Chandra G."/>
            <person name="Chen C.W."/>
            <person name="Collins M."/>
            <person name="Cronin A."/>
            <person name="Fraser A."/>
            <person name="Goble A."/>
            <person name="Hidalgo J."/>
            <person name="Hornsby T."/>
            <person name="Howarth S."/>
            <person name="Huang C.-H."/>
            <person name="Kieser T."/>
            <person name="Larke L."/>
            <person name="Murphy L.D."/>
            <person name="Oliver K."/>
            <person name="O'Neil S."/>
            <person name="Rabbinowitsch E."/>
            <person name="Rajandream M.A."/>
            <person name="Rutherford K.M."/>
            <person name="Rutter S."/>
            <person name="Seeger K."/>
            <person name="Saunders D."/>
            <person name="Sharp S."/>
            <person name="Squares R."/>
            <person name="Squares S."/>
            <person name="Taylor K."/>
            <person name="Warren T."/>
            <person name="Wietzorrek A."/>
            <person name="Woodward J.R."/>
            <person name="Barrell B.G."/>
            <person name="Parkhill J."/>
            <person name="Hopwood D.A."/>
        </authorList>
    </citation>
    <scope>NUCLEOTIDE SEQUENCE [LARGE SCALE GENOMIC DNA]</scope>
    <source>
        <strain>ATCC BAA-471 / A3(2) / M145</strain>
    </source>
</reference>
<reference key="2">
    <citation type="journal article" date="2003" name="Genes Dev.">
        <title>A novel class of secreted hydrophobic proteins is involved in aerial hyphae formation in Streptomyces coelicolor by forming amyloid-like fibrils.</title>
        <authorList>
            <person name="Claessen D."/>
            <person name="Rink R."/>
            <person name="de Jong W."/>
            <person name="Siebring J."/>
            <person name="de Vreugd P."/>
            <person name="Boersma F.G."/>
            <person name="Dijkhuizen L."/>
            <person name="Wosten H.A."/>
        </authorList>
    </citation>
    <scope>FUNCTION</scope>
    <scope>AMYLOID FORMATION</scope>
    <scope>SUBCELLULAR LOCATION</scope>
    <scope>DEVELOPMENTAL STAGE</scope>
    <scope>INDUCTION</scope>
    <scope>MASS SPECTROMETRY</scope>
    <scope>DISRUPTION PHENOTYPE</scope>
    <source>
        <strain>ATCC BAA-471 / A3(2) / M145</strain>
    </source>
</reference>
<reference key="3">
    <citation type="journal article" date="2003" name="Genes Dev.">
        <title>The chaplins: a family of hydrophobic cell-surface proteins involved in aerial mycelium formation in Streptomyces coelicolor.</title>
        <authorList>
            <person name="Elliot M.A."/>
            <person name="Karoonuthaisiri N."/>
            <person name="Huang J."/>
            <person name="Bibb M.J."/>
            <person name="Cohen S.N."/>
            <person name="Kao C.M."/>
            <person name="Buttner M.J."/>
        </authorList>
    </citation>
    <scope>FUNCTION</scope>
    <scope>SUBCELLULAR LOCATION</scope>
    <scope>DEVELOPMENTAL STAGE</scope>
    <scope>INDUCTION</scope>
    <scope>MASS SPECTROMETRY</scope>
    <source>
        <strain>A3(2) / M600</strain>
    </source>
</reference>
<reference key="4">
    <citation type="journal article" date="2004" name="Mol. Microbiol.">
        <title>The formation of the rodlet layer of streptomycetes is the result of the interplay between rodlins and chaplins.</title>
        <authorList>
            <person name="Claessen D."/>
            <person name="Stokroos I."/>
            <person name="Deelstra H.J."/>
            <person name="Penninga N.A."/>
            <person name="Bormann C."/>
            <person name="Salas J.A."/>
            <person name="Dijkhuizen L."/>
            <person name="Woesten H.A."/>
        </authorList>
    </citation>
    <scope>DISRUPTION PHENOTYPE</scope>
    <source>
        <strain>ATCC BAA-471 / A3(2) / M145</strain>
    </source>
</reference>
<reference key="5">
    <citation type="journal article" date="2007" name="Mol. Microbiol.">
        <title>SapB and the chaplins: connections between morphogenetic proteins in Streptomyces coelicolor.</title>
        <authorList>
            <person name="Capstick D.S."/>
            <person name="Willey J.M."/>
            <person name="Buttner M.J."/>
            <person name="Elliot M.A."/>
        </authorList>
    </citation>
    <scope>FUNCTION</scope>
    <scope>SUBCELLULAR LOCATION</scope>
    <scope>DEVELOPMENTAL STAGE</scope>
    <scope>INDUCTION</scope>
    <scope>DISRUPTION PHENOTYPE</scope>
    <source>
        <strain>A3(2) / M600</strain>
    </source>
</reference>
<reference key="6">
    <citation type="journal article" date="2008" name="J. Bacteriol.">
        <title>Function and redundancy of the chaplin cell surface proteins in aerial hypha formation, rodlet assembly, and viability in Streptomyces coelicolor.</title>
        <authorList>
            <person name="Di Berardo C."/>
            <person name="Capstick D.S."/>
            <person name="Bibb M.J."/>
            <person name="Findlay K.C."/>
            <person name="Buttner M.J."/>
            <person name="Elliot M.A."/>
        </authorList>
    </citation>
    <scope>FUNCTION</scope>
    <scope>CREATION OF A MINIMAL CHAPLIN STRAIN</scope>
    <scope>DISRUPTION PHENOTYPE</scope>
    <source>
        <strain>A3(2) / M600</strain>
    </source>
</reference>
<reference key="7">
    <citation type="journal article" date="2009" name="Mol. Microbiol.">
        <title>Attachment of Streptomyces coelicolor is mediated by amyloidal fimbriae that are anchored to the cell surface via cellulose.</title>
        <authorList>
            <person name="de Jong W."/>
            <person name="Woesten H.A."/>
            <person name="Dijkhuizen L."/>
            <person name="Claessen D."/>
        </authorList>
    </citation>
    <scope>FUNCTION IN GROWTH SUBSTRATE ATTACHMENT</scope>
    <scope>SUBCELLULAR LOCATION</scope>
    <scope>DISRUPTION PHENOTYPE</scope>
    <source>
        <strain>ATCC BAA-471 / A3(2) / M145</strain>
    </source>
</reference>
<reference key="8">
    <citation type="journal article" date="2011" name="PLoS ONE">
        <title>The assembly of individual chaplin peptides from Streptomyces coelicolor into functional amyloid fibrils.</title>
        <authorList>
            <person name="Sawyer E.B."/>
            <person name="Claessen D."/>
            <person name="Haas M."/>
            <person name="Hurgobin B."/>
            <person name="Gras S.L."/>
        </authorList>
    </citation>
    <scope>FUNCTION</scope>
    <scope>AMYLOID FORMATION</scope>
</reference>
<reference key="9">
    <citation type="journal article" date="2013" name="J. Struct. Biol.">
        <title>Chaplins of Streptomyces coelicolor self-assemble into two distinct functional amyloids.</title>
        <authorList>
            <person name="Bokhove M."/>
            <person name="Claessen D."/>
            <person name="de Jong W."/>
            <person name="Dijkhuizen L."/>
            <person name="Boekema E.J."/>
            <person name="Oostergetel G.T."/>
        </authorList>
    </citation>
    <scope>FUNCTION</scope>
    <scope>AMYLOID FORMATION</scope>
</reference>
<reference key="10">
    <citation type="journal article" date="2014" name="Appl. Microbiol. Biotechnol.">
        <title>Surface modification using interfacial assembly of the Streptomyces chaplin proteins.</title>
        <authorList>
            <person name="Ekkers D.M."/>
            <person name="Claessen D."/>
            <person name="Galli F."/>
            <person name="Stamhuis E."/>
        </authorList>
    </citation>
    <scope>BIOTECHNOLOGY</scope>
    <source>
        <strain>ATCC BAA-471 / A3(2) / M145</strain>
    </source>
</reference>
<reference key="11">
    <citation type="journal article" date="2017" name="J. Struct. Biol.">
        <title>The pH-dependent assembly of chaplin E from Streptomyces coelicolor.</title>
        <authorList>
            <person name="Dokouhaki M."/>
            <person name="Hung A."/>
            <person name="Day L."/>
            <person name="Gras S.L."/>
        </authorList>
    </citation>
    <scope>AMYLOID FORMATION</scope>
    <scope>DOMAIN</scope>
</reference>
<evidence type="ECO:0000255" key="1">
    <source>
        <dbReference type="PROSITE-ProRule" id="PRU01232"/>
    </source>
</evidence>
<evidence type="ECO:0000269" key="2">
    <source>
    </source>
</evidence>
<evidence type="ECO:0000269" key="3">
    <source>
    </source>
</evidence>
<evidence type="ECO:0000269" key="4">
    <source>
    </source>
</evidence>
<evidence type="ECO:0000269" key="5">
    <source>
    </source>
</evidence>
<evidence type="ECO:0000269" key="6">
    <source>
    </source>
</evidence>
<evidence type="ECO:0000269" key="7">
    <source>
    </source>
</evidence>
<evidence type="ECO:0000269" key="8">
    <source>
    </source>
</evidence>
<evidence type="ECO:0000269" key="9">
    <source>
    </source>
</evidence>
<evidence type="ECO:0000269" key="10">
    <source>
    </source>
</evidence>
<evidence type="ECO:0000269" key="11">
    <source>
    </source>
</evidence>
<evidence type="ECO:0000303" key="12">
    <source>
    </source>
</evidence>
<evidence type="ECO:0000305" key="13">
    <source>
    </source>
</evidence>
<evidence type="ECO:0000305" key="14">
    <source>
    </source>
</evidence>
<feature type="signal peptide" evidence="2 3">
    <location>
        <begin position="1"/>
        <end position="27"/>
    </location>
</feature>
<feature type="chain" id="PRO_5004336130" description="Chaplin-E">
    <location>
        <begin position="28"/>
        <end position="82"/>
    </location>
</feature>
<feature type="domain" description="Chaplin" evidence="1">
    <location>
        <begin position="41"/>
        <end position="81"/>
    </location>
</feature>
<protein>
    <recommendedName>
        <fullName evidence="12">Chaplin-E</fullName>
    </recommendedName>
</protein>
<proteinExistence type="evidence at protein level"/>